<feature type="chain" id="PRO_1000050763" description="Large ribosomal subunit protein bL35">
    <location>
        <begin position="1"/>
        <end position="64"/>
    </location>
</feature>
<organism>
    <name type="scientific">Shewanella frigidimarina (strain NCIMB 400)</name>
    <dbReference type="NCBI Taxonomy" id="318167"/>
    <lineage>
        <taxon>Bacteria</taxon>
        <taxon>Pseudomonadati</taxon>
        <taxon>Pseudomonadota</taxon>
        <taxon>Gammaproteobacteria</taxon>
        <taxon>Alteromonadales</taxon>
        <taxon>Shewanellaceae</taxon>
        <taxon>Shewanella</taxon>
    </lineage>
</organism>
<gene>
    <name evidence="1" type="primary">rpmI</name>
    <name type="ordered locus">Sfri_2026</name>
</gene>
<protein>
    <recommendedName>
        <fullName evidence="1">Large ribosomal subunit protein bL35</fullName>
    </recommendedName>
    <alternativeName>
        <fullName evidence="2">50S ribosomal protein L35</fullName>
    </alternativeName>
</protein>
<sequence length="64" mass="7383">MPKMKTDKGVAKRFKKTANGFKRKQAHLRHILTKKSTKRKRHLRAKCLVAKSDVPAIARQLPYA</sequence>
<comment type="similarity">
    <text evidence="1">Belongs to the bacterial ribosomal protein bL35 family.</text>
</comment>
<reference key="1">
    <citation type="submission" date="2006-08" db="EMBL/GenBank/DDBJ databases">
        <title>Complete sequence of Shewanella frigidimarina NCIMB 400.</title>
        <authorList>
            <consortium name="US DOE Joint Genome Institute"/>
            <person name="Copeland A."/>
            <person name="Lucas S."/>
            <person name="Lapidus A."/>
            <person name="Barry K."/>
            <person name="Detter J.C."/>
            <person name="Glavina del Rio T."/>
            <person name="Hammon N."/>
            <person name="Israni S."/>
            <person name="Dalin E."/>
            <person name="Tice H."/>
            <person name="Pitluck S."/>
            <person name="Fredrickson J.K."/>
            <person name="Kolker E."/>
            <person name="McCuel L.A."/>
            <person name="DiChristina T."/>
            <person name="Nealson K.H."/>
            <person name="Newman D."/>
            <person name="Tiedje J.M."/>
            <person name="Zhou J."/>
            <person name="Romine M.F."/>
            <person name="Culley D.E."/>
            <person name="Serres M."/>
            <person name="Chertkov O."/>
            <person name="Brettin T."/>
            <person name="Bruce D."/>
            <person name="Han C."/>
            <person name="Tapia R."/>
            <person name="Gilna P."/>
            <person name="Schmutz J."/>
            <person name="Larimer F."/>
            <person name="Land M."/>
            <person name="Hauser L."/>
            <person name="Kyrpides N."/>
            <person name="Mikhailova N."/>
            <person name="Richardson P."/>
        </authorList>
    </citation>
    <scope>NUCLEOTIDE SEQUENCE [LARGE SCALE GENOMIC DNA]</scope>
    <source>
        <strain>NCIMB 400</strain>
    </source>
</reference>
<accession>Q082E3</accession>
<dbReference type="EMBL" id="CP000447">
    <property type="protein sequence ID" value="ABI71872.1"/>
    <property type="molecule type" value="Genomic_DNA"/>
</dbReference>
<dbReference type="RefSeq" id="WP_011496149.1">
    <property type="nucleotide sequence ID" value="NC_008345.1"/>
</dbReference>
<dbReference type="SMR" id="Q082E3"/>
<dbReference type="STRING" id="318167.Sfri_2026"/>
<dbReference type="GeneID" id="90570309"/>
<dbReference type="KEGG" id="sfr:Sfri_2026"/>
<dbReference type="eggNOG" id="COG0291">
    <property type="taxonomic scope" value="Bacteria"/>
</dbReference>
<dbReference type="HOGENOM" id="CLU_169643_1_1_6"/>
<dbReference type="OrthoDB" id="47476at2"/>
<dbReference type="Proteomes" id="UP000000684">
    <property type="component" value="Chromosome"/>
</dbReference>
<dbReference type="GO" id="GO:0022625">
    <property type="term" value="C:cytosolic large ribosomal subunit"/>
    <property type="evidence" value="ECO:0007669"/>
    <property type="project" value="TreeGrafter"/>
</dbReference>
<dbReference type="GO" id="GO:0003735">
    <property type="term" value="F:structural constituent of ribosome"/>
    <property type="evidence" value="ECO:0007669"/>
    <property type="project" value="InterPro"/>
</dbReference>
<dbReference type="GO" id="GO:0006412">
    <property type="term" value="P:translation"/>
    <property type="evidence" value="ECO:0007669"/>
    <property type="project" value="UniProtKB-UniRule"/>
</dbReference>
<dbReference type="FunFam" id="4.10.410.60:FF:000001">
    <property type="entry name" value="50S ribosomal protein L35"/>
    <property type="match status" value="1"/>
</dbReference>
<dbReference type="Gene3D" id="4.10.410.60">
    <property type="match status" value="1"/>
</dbReference>
<dbReference type="HAMAP" id="MF_00514">
    <property type="entry name" value="Ribosomal_bL35"/>
    <property type="match status" value="1"/>
</dbReference>
<dbReference type="InterPro" id="IPR001706">
    <property type="entry name" value="Ribosomal_bL35"/>
</dbReference>
<dbReference type="InterPro" id="IPR021137">
    <property type="entry name" value="Ribosomal_bL35-like"/>
</dbReference>
<dbReference type="InterPro" id="IPR018265">
    <property type="entry name" value="Ribosomal_bL35_CS"/>
</dbReference>
<dbReference type="InterPro" id="IPR037229">
    <property type="entry name" value="Ribosomal_bL35_sf"/>
</dbReference>
<dbReference type="NCBIfam" id="TIGR00001">
    <property type="entry name" value="rpmI_bact"/>
    <property type="match status" value="1"/>
</dbReference>
<dbReference type="PANTHER" id="PTHR33343">
    <property type="entry name" value="54S RIBOSOMAL PROTEIN BL35M"/>
    <property type="match status" value="1"/>
</dbReference>
<dbReference type="PANTHER" id="PTHR33343:SF1">
    <property type="entry name" value="LARGE RIBOSOMAL SUBUNIT PROTEIN BL35M"/>
    <property type="match status" value="1"/>
</dbReference>
<dbReference type="Pfam" id="PF01632">
    <property type="entry name" value="Ribosomal_L35p"/>
    <property type="match status" value="1"/>
</dbReference>
<dbReference type="PRINTS" id="PR00064">
    <property type="entry name" value="RIBOSOMALL35"/>
</dbReference>
<dbReference type="SUPFAM" id="SSF143034">
    <property type="entry name" value="L35p-like"/>
    <property type="match status" value="1"/>
</dbReference>
<dbReference type="PROSITE" id="PS00936">
    <property type="entry name" value="RIBOSOMAL_L35"/>
    <property type="match status" value="1"/>
</dbReference>
<name>RL35_SHEFN</name>
<keyword id="KW-1185">Reference proteome</keyword>
<keyword id="KW-0687">Ribonucleoprotein</keyword>
<keyword id="KW-0689">Ribosomal protein</keyword>
<proteinExistence type="inferred from homology"/>
<evidence type="ECO:0000255" key="1">
    <source>
        <dbReference type="HAMAP-Rule" id="MF_00514"/>
    </source>
</evidence>
<evidence type="ECO:0000305" key="2"/>